<dbReference type="EMBL" id="AY665833">
    <property type="protein sequence ID" value="AAV87199.1"/>
    <property type="molecule type" value="Genomic_DNA"/>
</dbReference>
<dbReference type="RefSeq" id="NP_001012485.1">
    <property type="nucleotide sequence ID" value="NM_001012467.2"/>
</dbReference>
<dbReference type="SMR" id="Q5GAM0"/>
<dbReference type="FunCoup" id="Q5GAM0">
    <property type="interactions" value="2"/>
</dbReference>
<dbReference type="STRING" id="10116.ENSRNOP00000013619"/>
<dbReference type="GlyCosmos" id="Q5GAM0">
    <property type="glycosylation" value="2 sites, No reported glycans"/>
</dbReference>
<dbReference type="GlyGen" id="Q5GAM0">
    <property type="glycosylation" value="2 sites"/>
</dbReference>
<dbReference type="PaxDb" id="10116-ENSRNOP00000013619"/>
<dbReference type="GeneID" id="305840"/>
<dbReference type="KEGG" id="rno:305840"/>
<dbReference type="UCSC" id="RGD:1310415">
    <property type="organism name" value="rat"/>
</dbReference>
<dbReference type="AGR" id="RGD:1310415"/>
<dbReference type="CTD" id="338879"/>
<dbReference type="RGD" id="1310415">
    <property type="gene designation" value="Rnase10"/>
</dbReference>
<dbReference type="VEuPathDB" id="HostDB:ENSRNOG00000010261"/>
<dbReference type="eggNOG" id="ENOG502RPGF">
    <property type="taxonomic scope" value="Eukaryota"/>
</dbReference>
<dbReference type="HOGENOM" id="CLU_1280301_0_0_1"/>
<dbReference type="InParanoid" id="Q5GAM0"/>
<dbReference type="OrthoDB" id="67494at9989"/>
<dbReference type="PhylomeDB" id="Q5GAM0"/>
<dbReference type="PRO" id="PR:Q5GAM0"/>
<dbReference type="Proteomes" id="UP000002494">
    <property type="component" value="Chromosome 15"/>
</dbReference>
<dbReference type="Bgee" id="ENSRNOG00000010261">
    <property type="expression patterns" value="Expressed in spleen and 9 other cell types or tissues"/>
</dbReference>
<dbReference type="ExpressionAtlas" id="Q5GAM0">
    <property type="expression patterns" value="baseline"/>
</dbReference>
<dbReference type="GO" id="GO:0005576">
    <property type="term" value="C:extracellular region"/>
    <property type="evidence" value="ECO:0007669"/>
    <property type="project" value="UniProtKB-SubCell"/>
</dbReference>
<dbReference type="GO" id="GO:0003676">
    <property type="term" value="F:nucleic acid binding"/>
    <property type="evidence" value="ECO:0007669"/>
    <property type="project" value="InterPro"/>
</dbReference>
<dbReference type="GO" id="GO:0050830">
    <property type="term" value="P:defense response to Gram-positive bacterium"/>
    <property type="evidence" value="ECO:0000318"/>
    <property type="project" value="GO_Central"/>
</dbReference>
<dbReference type="GO" id="GO:0003382">
    <property type="term" value="P:epithelial cell morphogenesis"/>
    <property type="evidence" value="ECO:0000266"/>
    <property type="project" value="RGD"/>
</dbReference>
<dbReference type="GO" id="GO:0034113">
    <property type="term" value="P:heterotypic cell-cell adhesion"/>
    <property type="evidence" value="ECO:0000250"/>
    <property type="project" value="UniProtKB"/>
</dbReference>
<dbReference type="GO" id="GO:0008584">
    <property type="term" value="P:male gonad development"/>
    <property type="evidence" value="ECO:0000266"/>
    <property type="project" value="RGD"/>
</dbReference>
<dbReference type="GO" id="GO:0022409">
    <property type="term" value="P:positive regulation of cell-cell adhesion"/>
    <property type="evidence" value="ECO:0000250"/>
    <property type="project" value="UniProtKB"/>
</dbReference>
<dbReference type="GO" id="GO:1902093">
    <property type="term" value="P:positive regulation of flagellated sperm motility"/>
    <property type="evidence" value="ECO:0000250"/>
    <property type="project" value="UniProtKB"/>
</dbReference>
<dbReference type="GO" id="GO:0080154">
    <property type="term" value="P:regulation of fertilization"/>
    <property type="evidence" value="ECO:0000250"/>
    <property type="project" value="UniProtKB"/>
</dbReference>
<dbReference type="GO" id="GO:0072520">
    <property type="term" value="P:seminiferous tubule development"/>
    <property type="evidence" value="ECO:0000266"/>
    <property type="project" value="RGD"/>
</dbReference>
<dbReference type="GO" id="GO:0007338">
    <property type="term" value="P:single fertilization"/>
    <property type="evidence" value="ECO:0000266"/>
    <property type="project" value="RGD"/>
</dbReference>
<dbReference type="CDD" id="cd00163">
    <property type="entry name" value="RNase_A"/>
    <property type="match status" value="1"/>
</dbReference>
<dbReference type="FunFam" id="3.10.130.10:FF:000002">
    <property type="entry name" value="Inactive ribonuclease-like protein 10"/>
    <property type="match status" value="1"/>
</dbReference>
<dbReference type="Gene3D" id="3.10.130.10">
    <property type="entry name" value="Ribonuclease A-like domain"/>
    <property type="match status" value="1"/>
</dbReference>
<dbReference type="InterPro" id="IPR001427">
    <property type="entry name" value="RNaseA"/>
</dbReference>
<dbReference type="InterPro" id="IPR036816">
    <property type="entry name" value="RNaseA-like_dom_sf"/>
</dbReference>
<dbReference type="InterPro" id="IPR023412">
    <property type="entry name" value="RNaseA_domain"/>
</dbReference>
<dbReference type="PANTHER" id="PTHR11437:SF63">
    <property type="entry name" value="INACTIVE RIBONUCLEASE-LIKE PROTEIN 10"/>
    <property type="match status" value="1"/>
</dbReference>
<dbReference type="PANTHER" id="PTHR11437">
    <property type="entry name" value="RIBONUCLEASE"/>
    <property type="match status" value="1"/>
</dbReference>
<dbReference type="Pfam" id="PF00074">
    <property type="entry name" value="RnaseA"/>
    <property type="match status" value="1"/>
</dbReference>
<dbReference type="PRINTS" id="PR00794">
    <property type="entry name" value="RIBONUCLEASE"/>
</dbReference>
<dbReference type="SMART" id="SM00092">
    <property type="entry name" value="RNAse_Pc"/>
    <property type="match status" value="1"/>
</dbReference>
<dbReference type="SUPFAM" id="SSF54076">
    <property type="entry name" value="RNase A-like"/>
    <property type="match status" value="1"/>
</dbReference>
<evidence type="ECO:0000250" key="1"/>
<evidence type="ECO:0000255" key="2"/>
<evidence type="ECO:0000269" key="3">
    <source>
    </source>
</evidence>
<evidence type="ECO:0000305" key="4"/>
<keyword id="KW-0130">Cell adhesion</keyword>
<keyword id="KW-0278">Fertilization</keyword>
<keyword id="KW-0325">Glycoprotein</keyword>
<keyword id="KW-1185">Reference proteome</keyword>
<keyword id="KW-0964">Secreted</keyword>
<keyword id="KW-0732">Signal</keyword>
<sequence>MKVTLVHLLFMMLLLLLGLGVGLGLGLHMAAAILENQPLDEFWPSDSQDTAEATEEGQGTRTTEALVLDNKEMAVPVWSEDTVLSEDEVGGSRMLRAKTLLQSKQGYLKFDLNIRDCNVMMAHKIKEHNQSCINDYTFIHEDPSTVGAVCNSPLVDCDLKGGKCHKSPRPFDLTLCKLAKPGQVTPNCHYLTYITEKVIIITCNNTKQLEIK</sequence>
<organism>
    <name type="scientific">Rattus norvegicus</name>
    <name type="common">Rat</name>
    <dbReference type="NCBI Taxonomy" id="10116"/>
    <lineage>
        <taxon>Eukaryota</taxon>
        <taxon>Metazoa</taxon>
        <taxon>Chordata</taxon>
        <taxon>Craniata</taxon>
        <taxon>Vertebrata</taxon>
        <taxon>Euteleostomi</taxon>
        <taxon>Mammalia</taxon>
        <taxon>Eutheria</taxon>
        <taxon>Euarchontoglires</taxon>
        <taxon>Glires</taxon>
        <taxon>Rodentia</taxon>
        <taxon>Myomorpha</taxon>
        <taxon>Muroidea</taxon>
        <taxon>Muridae</taxon>
        <taxon>Murinae</taxon>
        <taxon>Rattus</taxon>
    </lineage>
</organism>
<protein>
    <recommendedName>
        <fullName>Inactive ribonuclease-like protein 10</fullName>
    </recommendedName>
    <alternativeName>
        <fullName>Protein Train A</fullName>
    </alternativeName>
</protein>
<proteinExistence type="evidence at transcript level"/>
<gene>
    <name type="primary">Rnase10</name>
</gene>
<feature type="signal peptide" evidence="2">
    <location>
        <begin position="1"/>
        <end position="24"/>
    </location>
</feature>
<feature type="chain" id="PRO_0000045966" description="Inactive ribonuclease-like protein 10">
    <location>
        <begin position="25"/>
        <end position="212"/>
    </location>
</feature>
<feature type="glycosylation site" description="N-linked (GlcNAc...) asparagine" evidence="2">
    <location>
        <position position="129"/>
    </location>
</feature>
<feature type="glycosylation site" description="N-linked (GlcNAc...) asparagine" evidence="2">
    <location>
        <position position="204"/>
    </location>
</feature>
<name>RNS10_RAT</name>
<comment type="function">
    <text evidence="1">Secreted proximal epididymal protein required for post-testicular sperm maturation and male fertility. May be involved in sperm adhesion to the egg zona pellucida. Does not have ribonuclease activity (By similarity).</text>
</comment>
<comment type="subcellular location">
    <subcellularLocation>
        <location evidence="1">Secreted</location>
    </subcellularLocation>
</comment>
<comment type="tissue specificity">
    <text evidence="3">Male-specific expression in proximal caput of the epididymis.</text>
</comment>
<comment type="PTM">
    <text evidence="1">The N-terminus is blocked. Glycosylated (By similarity).</text>
</comment>
<comment type="similarity">
    <text evidence="4">Belongs to the pancreatic ribonuclease family.</text>
</comment>
<accession>Q5GAM0</accession>
<reference key="1">
    <citation type="journal article" date="2005" name="Genomics">
        <title>The ribonuclease A superfamily of mammals and birds: identifying new members and tracing evolutionary histories.</title>
        <authorList>
            <person name="Cho S."/>
            <person name="Beintema J.J."/>
            <person name="Zhang J."/>
        </authorList>
    </citation>
    <scope>NUCLEOTIDE SEQUENCE [GENOMIC DNA]</scope>
    <source>
        <strain>Brown Norway</strain>
    </source>
</reference>
<reference key="2">
    <citation type="journal article" date="2004" name="Biol. Reprod.">
        <title>Identification of a member of a new RNase A family specifically secreted by epididymal caput epithelium.</title>
        <authorList>
            <person name="Castella S."/>
            <person name="Fouchecourt S."/>
            <person name="Teixeira-Gomes A.P."/>
            <person name="Vinh J."/>
            <person name="Belghazi M."/>
            <person name="Dacheux F."/>
            <person name="Dacheux J.-L."/>
        </authorList>
    </citation>
    <scope>TISSUE SPECIFICITY</scope>
</reference>